<keyword id="KW-0067">ATP-binding</keyword>
<keyword id="KW-0238">DNA-binding</keyword>
<keyword id="KW-0479">Metal-binding</keyword>
<keyword id="KW-0547">Nucleotide-binding</keyword>
<keyword id="KW-0678">Repressor</keyword>
<keyword id="KW-0804">Transcription</keyword>
<keyword id="KW-0805">Transcription regulation</keyword>
<keyword id="KW-0862">Zinc</keyword>
<keyword id="KW-0863">Zinc-finger</keyword>
<proteinExistence type="inferred from homology"/>
<comment type="function">
    <text evidence="1">Negatively regulates transcription of bacterial ribonucleotide reductase nrd genes and operons by binding to NrdR-boxes.</text>
</comment>
<comment type="cofactor">
    <cofactor evidence="1">
        <name>Zn(2+)</name>
        <dbReference type="ChEBI" id="CHEBI:29105"/>
    </cofactor>
    <text evidence="1">Binds 1 zinc ion.</text>
</comment>
<comment type="similarity">
    <text evidence="1">Belongs to the NrdR family.</text>
</comment>
<reference key="1">
    <citation type="submission" date="2008-05" db="EMBL/GenBank/DDBJ databases">
        <title>Complete genome sequence of Clostridium botulinum E3 str. Alaska E43.</title>
        <authorList>
            <person name="Brinkac L.M."/>
            <person name="Brown J.L."/>
            <person name="Bruce D."/>
            <person name="Detter C."/>
            <person name="Munk C."/>
            <person name="Smith L.A."/>
            <person name="Smith T.J."/>
            <person name="Sutton G."/>
            <person name="Brettin T.S."/>
        </authorList>
    </citation>
    <scope>NUCLEOTIDE SEQUENCE [LARGE SCALE GENOMIC DNA]</scope>
    <source>
        <strain>Alaska E43 / Type E3</strain>
    </source>
</reference>
<accession>B2V3Y1</accession>
<gene>
    <name evidence="1" type="primary">nrdR</name>
    <name type="ordered locus">CLH_1144</name>
</gene>
<name>NRDR_CLOBA</name>
<evidence type="ECO:0000255" key="1">
    <source>
        <dbReference type="HAMAP-Rule" id="MF_00440"/>
    </source>
</evidence>
<protein>
    <recommendedName>
        <fullName evidence="1">Transcriptional repressor NrdR</fullName>
    </recommendedName>
</protein>
<organism>
    <name type="scientific">Clostridium botulinum (strain Alaska E43 / Type E3)</name>
    <dbReference type="NCBI Taxonomy" id="508767"/>
    <lineage>
        <taxon>Bacteria</taxon>
        <taxon>Bacillati</taxon>
        <taxon>Bacillota</taxon>
        <taxon>Clostridia</taxon>
        <taxon>Eubacteriales</taxon>
        <taxon>Clostridiaceae</taxon>
        <taxon>Clostridium</taxon>
    </lineage>
</organism>
<dbReference type="EMBL" id="CP001078">
    <property type="protein sequence ID" value="ACD53721.1"/>
    <property type="molecule type" value="Genomic_DNA"/>
</dbReference>
<dbReference type="RefSeq" id="WP_003369436.1">
    <property type="nucleotide sequence ID" value="NC_010723.1"/>
</dbReference>
<dbReference type="SMR" id="B2V3Y1"/>
<dbReference type="KEGG" id="cbt:CLH_1144"/>
<dbReference type="HOGENOM" id="CLU_108412_0_0_9"/>
<dbReference type="GO" id="GO:0005524">
    <property type="term" value="F:ATP binding"/>
    <property type="evidence" value="ECO:0007669"/>
    <property type="project" value="UniProtKB-KW"/>
</dbReference>
<dbReference type="GO" id="GO:0003677">
    <property type="term" value="F:DNA binding"/>
    <property type="evidence" value="ECO:0007669"/>
    <property type="project" value="UniProtKB-KW"/>
</dbReference>
<dbReference type="GO" id="GO:0008270">
    <property type="term" value="F:zinc ion binding"/>
    <property type="evidence" value="ECO:0007669"/>
    <property type="project" value="UniProtKB-UniRule"/>
</dbReference>
<dbReference type="GO" id="GO:0045892">
    <property type="term" value="P:negative regulation of DNA-templated transcription"/>
    <property type="evidence" value="ECO:0007669"/>
    <property type="project" value="UniProtKB-UniRule"/>
</dbReference>
<dbReference type="HAMAP" id="MF_00440">
    <property type="entry name" value="NrdR"/>
    <property type="match status" value="1"/>
</dbReference>
<dbReference type="InterPro" id="IPR005144">
    <property type="entry name" value="ATP-cone_dom"/>
</dbReference>
<dbReference type="InterPro" id="IPR055173">
    <property type="entry name" value="NrdR-like_N"/>
</dbReference>
<dbReference type="InterPro" id="IPR003796">
    <property type="entry name" value="RNR_NrdR-like"/>
</dbReference>
<dbReference type="NCBIfam" id="TIGR00244">
    <property type="entry name" value="transcriptional regulator NrdR"/>
    <property type="match status" value="1"/>
</dbReference>
<dbReference type="PANTHER" id="PTHR30455">
    <property type="entry name" value="TRANSCRIPTIONAL REPRESSOR NRDR"/>
    <property type="match status" value="1"/>
</dbReference>
<dbReference type="PANTHER" id="PTHR30455:SF2">
    <property type="entry name" value="TRANSCRIPTIONAL REPRESSOR NRDR"/>
    <property type="match status" value="1"/>
</dbReference>
<dbReference type="Pfam" id="PF03477">
    <property type="entry name" value="ATP-cone"/>
    <property type="match status" value="1"/>
</dbReference>
<dbReference type="Pfam" id="PF22811">
    <property type="entry name" value="Zn_ribbon_NrdR"/>
    <property type="match status" value="1"/>
</dbReference>
<dbReference type="PROSITE" id="PS51161">
    <property type="entry name" value="ATP_CONE"/>
    <property type="match status" value="1"/>
</dbReference>
<feature type="chain" id="PRO_1000124482" description="Transcriptional repressor NrdR">
    <location>
        <begin position="1"/>
        <end position="150"/>
    </location>
</feature>
<feature type="domain" description="ATP-cone" evidence="1">
    <location>
        <begin position="49"/>
        <end position="139"/>
    </location>
</feature>
<feature type="zinc finger region" evidence="1">
    <location>
        <begin position="3"/>
        <end position="34"/>
    </location>
</feature>
<sequence length="150" mass="17743">MKCPFCNFEESKVVDSRATDDNTTIRRRRECLNCNKRYTTYEKIEDFPVLVVKKDLTRENFNKEKIINGLIIACQKRPVSRKQIEDIAYEIEKSISNRMVTEIASKDIGEMIMDKLKQVDEISYVRFASVYRQFKDINTFLEEIKNLVVN</sequence>